<proteinExistence type="evidence at protein level"/>
<organism>
    <name type="scientific">Mus musculus</name>
    <name type="common">Mouse</name>
    <dbReference type="NCBI Taxonomy" id="10090"/>
    <lineage>
        <taxon>Eukaryota</taxon>
        <taxon>Metazoa</taxon>
        <taxon>Chordata</taxon>
        <taxon>Craniata</taxon>
        <taxon>Vertebrata</taxon>
        <taxon>Euteleostomi</taxon>
        <taxon>Mammalia</taxon>
        <taxon>Eutheria</taxon>
        <taxon>Euarchontoglires</taxon>
        <taxon>Glires</taxon>
        <taxon>Rodentia</taxon>
        <taxon>Myomorpha</taxon>
        <taxon>Muroidea</taxon>
        <taxon>Muridae</taxon>
        <taxon>Murinae</taxon>
        <taxon>Mus</taxon>
        <taxon>Mus</taxon>
    </lineage>
</organism>
<reference key="1">
    <citation type="journal article" date="2009" name="PLoS Biol.">
        <title>Lineage-specific biology revealed by a finished genome assembly of the mouse.</title>
        <authorList>
            <person name="Church D.M."/>
            <person name="Goodstadt L."/>
            <person name="Hillier L.W."/>
            <person name="Zody M.C."/>
            <person name="Goldstein S."/>
            <person name="She X."/>
            <person name="Bult C.J."/>
            <person name="Agarwala R."/>
            <person name="Cherry J.L."/>
            <person name="DiCuccio M."/>
            <person name="Hlavina W."/>
            <person name="Kapustin Y."/>
            <person name="Meric P."/>
            <person name="Maglott D."/>
            <person name="Birtle Z."/>
            <person name="Marques A.C."/>
            <person name="Graves T."/>
            <person name="Zhou S."/>
            <person name="Teague B."/>
            <person name="Potamousis K."/>
            <person name="Churas C."/>
            <person name="Place M."/>
            <person name="Herschleb J."/>
            <person name="Runnheim R."/>
            <person name="Forrest D."/>
            <person name="Amos-Landgraf J."/>
            <person name="Schwartz D.C."/>
            <person name="Cheng Z."/>
            <person name="Lindblad-Toh K."/>
            <person name="Eichler E.E."/>
            <person name="Ponting C.P."/>
        </authorList>
    </citation>
    <scope>NUCLEOTIDE SEQUENCE [LARGE SCALE GENOMIC DNA]</scope>
    <source>
        <strain>C57BL/6J</strain>
    </source>
</reference>
<reference key="2">
    <citation type="journal article" date="2010" name="Cell">
        <title>A tissue-specific atlas of mouse protein phosphorylation and expression.</title>
        <authorList>
            <person name="Huttlin E.L."/>
            <person name="Jedrychowski M.P."/>
            <person name="Elias J.E."/>
            <person name="Goswami T."/>
            <person name="Rad R."/>
            <person name="Beausoleil S.A."/>
            <person name="Villen J."/>
            <person name="Haas W."/>
            <person name="Sowa M.E."/>
            <person name="Gygi S.P."/>
        </authorList>
    </citation>
    <scope>IDENTIFICATION BY MASS SPECTROMETRY [LARGE SCALE ANALYSIS]</scope>
</reference>
<reference key="3">
    <citation type="journal article" date="2023" name="Nucleic Acids Res.">
        <title>Structural basis of Qng1-mediated salvage of the micronutrient queuine from queuosine-5'-monophosphate as the biological substrate.</title>
        <authorList>
            <person name="Hung S.H."/>
            <person name="Elliott G.I."/>
            <person name="Ramkumar T.R."/>
            <person name="Burtnyak L."/>
            <person name="McGrenaghan C.J."/>
            <person name="Alkuzweny S."/>
            <person name="Quaiyum S."/>
            <person name="Iwata-Reuyl D."/>
            <person name="Pan X."/>
            <person name="Green B.D."/>
            <person name="Kelly V.P."/>
            <person name="de Crecy-Lagard V."/>
            <person name="Swairjo M.A."/>
        </authorList>
    </citation>
    <scope>TISSUE SPECIFICITY</scope>
</reference>
<protein>
    <recommendedName>
        <fullName evidence="2">Queuosine 5'-phosphate N-glycosylase/hydrolase</fullName>
        <ecNumber evidence="2">3.2.2.-</ecNumber>
    </recommendedName>
    <alternativeName>
        <fullName evidence="2">Queuosine-nucleotide N-glycosylase/hydrolase</fullName>
    </alternativeName>
</protein>
<comment type="function">
    <text evidence="2">Catalyzes the hydrolysis of queuosine 5'-phosphate, releasing the nucleobase queuine (q). Is required for salvage of queuine from exogenous queuosine (Q) that is imported and then converted to queuosine 5'-phosphate intracellularly.</text>
</comment>
<comment type="catalytic activity">
    <reaction evidence="2">
        <text>queuosine 5'-phosphate + H2O = queuine + D-ribose 5-phosphate</text>
        <dbReference type="Rhea" id="RHEA:75387"/>
        <dbReference type="ChEBI" id="CHEBI:15377"/>
        <dbReference type="ChEBI" id="CHEBI:17433"/>
        <dbReference type="ChEBI" id="CHEBI:78346"/>
        <dbReference type="ChEBI" id="CHEBI:194371"/>
    </reaction>
    <physiologicalReaction direction="left-to-right" evidence="2">
        <dbReference type="Rhea" id="RHEA:75388"/>
    </physiologicalReaction>
</comment>
<comment type="tissue specificity">
    <text evidence="3">Highly expressed in liver.</text>
</comment>
<comment type="miscellaneous">
    <text evidence="2">Eukaryotes lack the canonical genes for de novo biosynthesis of queuosine (Q), present in most bacteria. Therefore, this molecule must be sourced from ingested food and/or the gut microbiota, and metabolized to its corresponding nucleobase, queuine (q), before incorporation into cytoplasmic and mitochondrial tRNAs. Incorporation of q into the anticodon of some tRNAs contributes to translational efficiency and accuracy.</text>
</comment>
<comment type="similarity">
    <text evidence="4">Belongs to the QNG1 protein family.</text>
</comment>
<accession>G3X8U3</accession>
<sequence>MGPPLSPRESARFVAENSRDVLVDHEGVRRAAELLLPAAAAWRVEQWKSLHELNPRGADEAALGWVFLVDSLNFSFWAEREDSKCAVRYGGTPYTGYWALCAAVNRALDQGIPITSASYYATVSLEQVRDIFRSDTAVPMPLMEERHRILNETGKILLEKFGGSFLNCVQKSGRSAQKLMQLIVENFPSYRDEAEFEGKRIAFYKRAQILVADTWSVLEGKGDGCFEDISSITMFADYRLPQILVYLGALKYSDELLKKLLKGEMLLNGDKQEVEIRGCSIWCVELIRDRLLELLEKGENSPVEINSVLLDYHLWDYAREHREDMKGVPFHRTRCIYY</sequence>
<keyword id="KW-0007">Acetylation</keyword>
<keyword id="KW-0378">Hydrolase</keyword>
<keyword id="KW-1185">Reference proteome</keyword>
<dbReference type="EC" id="3.2.2.-" evidence="2"/>
<dbReference type="EMBL" id="AC154437">
    <property type="status" value="NOT_ANNOTATED_CDS"/>
    <property type="molecule type" value="Genomic_DNA"/>
</dbReference>
<dbReference type="CCDS" id="CCDS49282.1"/>
<dbReference type="RefSeq" id="NP_081611.1">
    <property type="nucleotide sequence ID" value="NM_027335.1"/>
</dbReference>
<dbReference type="SMR" id="G3X8U3"/>
<dbReference type="FunCoup" id="G3X8U3">
    <property type="interactions" value="476"/>
</dbReference>
<dbReference type="STRING" id="10090.ENSMUSP00000022032"/>
<dbReference type="GlyGen" id="G3X8U3">
    <property type="glycosylation" value="1 site, 1 O-linked glycan (1 site)"/>
</dbReference>
<dbReference type="iPTMnet" id="G3X8U3"/>
<dbReference type="PhosphoSitePlus" id="G3X8U3"/>
<dbReference type="SwissPalm" id="G3X8U3"/>
<dbReference type="jPOST" id="G3X8U3"/>
<dbReference type="PaxDb" id="10090-ENSMUSP00000022032"/>
<dbReference type="PeptideAtlas" id="G3X8U3"/>
<dbReference type="ProteomicsDB" id="343493"/>
<dbReference type="Antibodypedia" id="57741">
    <property type="antibodies" value="98 antibodies from 14 providers"/>
</dbReference>
<dbReference type="Ensembl" id="ENSMUST00000022032.7">
    <property type="protein sequence ID" value="ENSMUSP00000022032.6"/>
    <property type="gene ID" value="ENSMUSG00000021550.7"/>
</dbReference>
<dbReference type="GeneID" id="70153"/>
<dbReference type="KEGG" id="mmu:70153"/>
<dbReference type="UCSC" id="uc007qtr.2">
    <property type="organism name" value="mouse"/>
</dbReference>
<dbReference type="AGR" id="MGI:1917403"/>
<dbReference type="CTD" id="84267"/>
<dbReference type="MGI" id="MGI:1917403">
    <property type="gene designation" value="Qng1"/>
</dbReference>
<dbReference type="VEuPathDB" id="HostDB:ENSMUSG00000021550"/>
<dbReference type="eggNOG" id="KOG2524">
    <property type="taxonomic scope" value="Eukaryota"/>
</dbReference>
<dbReference type="GeneTree" id="ENSGT00390000002374"/>
<dbReference type="HOGENOM" id="CLU_036001_2_1_1"/>
<dbReference type="InParanoid" id="G3X8U3"/>
<dbReference type="OMA" id="FSFWSEE"/>
<dbReference type="OrthoDB" id="416777at2759"/>
<dbReference type="PhylomeDB" id="G3X8U3"/>
<dbReference type="TreeFam" id="TF105811"/>
<dbReference type="BioGRID-ORCS" id="70153">
    <property type="hits" value="1 hit in 76 CRISPR screens"/>
</dbReference>
<dbReference type="ChiTaRS" id="2210016F16Rik">
    <property type="organism name" value="mouse"/>
</dbReference>
<dbReference type="PRO" id="PR:G3X8U3"/>
<dbReference type="Proteomes" id="UP000000589">
    <property type="component" value="Chromosome 13"/>
</dbReference>
<dbReference type="RNAct" id="G3X8U3">
    <property type="molecule type" value="protein"/>
</dbReference>
<dbReference type="Bgee" id="ENSMUSG00000021550">
    <property type="expression patterns" value="Expressed in small intestine Peyer's patch and 256 other cell types or tissues"/>
</dbReference>
<dbReference type="GO" id="GO:0016787">
    <property type="term" value="F:hydrolase activity"/>
    <property type="evidence" value="ECO:0007669"/>
    <property type="project" value="UniProtKB-KW"/>
</dbReference>
<dbReference type="GO" id="GO:0043174">
    <property type="term" value="P:nucleoside salvage"/>
    <property type="evidence" value="ECO:0000250"/>
    <property type="project" value="UniProtKB"/>
</dbReference>
<dbReference type="InterPro" id="IPR019438">
    <property type="entry name" value="Q_salvage"/>
</dbReference>
<dbReference type="PANTHER" id="PTHR21314:SF0">
    <property type="entry name" value="QUEUOSINE 5'-PHOSPHATE N-GLYCOSYLASE_HYDROLASE"/>
    <property type="match status" value="1"/>
</dbReference>
<dbReference type="PANTHER" id="PTHR21314">
    <property type="entry name" value="QUEUOSINE 5'-PHOSPHATE N-GLYCOSYLASE_HYDROLASE-RELATED"/>
    <property type="match status" value="1"/>
</dbReference>
<dbReference type="Pfam" id="PF10343">
    <property type="entry name" value="Q_salvage"/>
    <property type="match status" value="1"/>
</dbReference>
<gene>
    <name evidence="5" type="primary">QNG1</name>
    <name evidence="5" type="synonym">2210016F16Rik</name>
</gene>
<feature type="chain" id="PRO_0000458146" description="Queuosine 5'-phosphate N-glycosylase/hydrolase">
    <location>
        <begin position="1"/>
        <end position="338"/>
    </location>
</feature>
<feature type="active site" description="Nucleophile or transition state stabilizer" evidence="1">
    <location>
        <position position="237"/>
    </location>
</feature>
<feature type="binding site" evidence="2">
    <location>
        <position position="51"/>
    </location>
    <ligand>
        <name>queuine</name>
        <dbReference type="ChEBI" id="CHEBI:17433"/>
    </ligand>
</feature>
<feature type="binding site" evidence="2">
    <location>
        <position position="235"/>
    </location>
    <ligand>
        <name>queuine</name>
        <dbReference type="ChEBI" id="CHEBI:17433"/>
    </ligand>
</feature>
<feature type="binding site" evidence="2">
    <location>
        <position position="237"/>
    </location>
    <ligand>
        <name>queuine</name>
        <dbReference type="ChEBI" id="CHEBI:17433"/>
    </ligand>
</feature>
<feature type="binding site" evidence="2">
    <location>
        <position position="311"/>
    </location>
    <ligand>
        <name>queuine</name>
        <dbReference type="ChEBI" id="CHEBI:17433"/>
    </ligand>
</feature>
<feature type="binding site" evidence="2">
    <location>
        <position position="312"/>
    </location>
    <ligand>
        <name>queuine</name>
        <dbReference type="ChEBI" id="CHEBI:17433"/>
    </ligand>
</feature>
<feature type="binding site" evidence="2">
    <location>
        <position position="316"/>
    </location>
    <ligand>
        <name>queuine</name>
        <dbReference type="ChEBI" id="CHEBI:17433"/>
    </ligand>
</feature>
<feature type="modified residue" description="N-acetylmethionine" evidence="2">
    <location>
        <position position="1"/>
    </location>
</feature>
<name>QNG1_MOUSE</name>
<evidence type="ECO:0000250" key="1">
    <source>
        <dbReference type="UniProtKB" id="D1C7A6"/>
    </source>
</evidence>
<evidence type="ECO:0000250" key="2">
    <source>
        <dbReference type="UniProtKB" id="Q5T6V5"/>
    </source>
</evidence>
<evidence type="ECO:0000269" key="3">
    <source>
    </source>
</evidence>
<evidence type="ECO:0000305" key="4"/>
<evidence type="ECO:0000312" key="5">
    <source>
        <dbReference type="MGI" id="MGI:1917403"/>
    </source>
</evidence>